<proteinExistence type="evidence at transcript level"/>
<reference key="1">
    <citation type="submission" date="2006-08" db="EMBL/GenBank/DDBJ databases">
        <authorList>
            <consortium name="NIH - Mammalian Gene Collection (MGC) project"/>
        </authorList>
    </citation>
    <scope>NUCLEOTIDE SEQUENCE [LARGE SCALE MRNA]</scope>
    <source>
        <strain>Hereford</strain>
        <tissue>Fetal liver</tissue>
    </source>
</reference>
<keyword id="KW-0067">ATP-binding</keyword>
<keyword id="KW-0547">Nucleotide-binding</keyword>
<keyword id="KW-1185">Reference proteome</keyword>
<name>IRAK2_BOVIN</name>
<comment type="function">
    <text evidence="1">Binds to the IL-1 type I receptor following IL-1 engagement, triggering intracellular signaling cascades leading to transcriptional up-regulation and mRNA stabilization.</text>
</comment>
<comment type="subunit">
    <text evidence="1">Interacts with MYD88. IL-1 stimulation leads to the formation of a signaling complex which dissociates from the IL-1 receptor following the binding of PELI1 (By similarity).</text>
</comment>
<comment type="domain">
    <text>The protein kinase domain is predicted to be catalytically inactive.</text>
</comment>
<comment type="similarity">
    <text evidence="4">Belongs to the protein kinase superfamily. TKL Ser/Thr protein kinase family. Pelle subfamily.</text>
</comment>
<comment type="caution">
    <text evidence="4">Asn-331 is present instead of the conserved Asp which is expected to be an active site residue.</text>
</comment>
<evidence type="ECO:0000250" key="1"/>
<evidence type="ECO:0000255" key="2">
    <source>
        <dbReference type="PROSITE-ProRule" id="PRU00159"/>
    </source>
</evidence>
<evidence type="ECO:0000256" key="3">
    <source>
        <dbReference type="SAM" id="MobiDB-lite"/>
    </source>
</evidence>
<evidence type="ECO:0000305" key="4"/>
<accession>Q0P5I2</accession>
<feature type="chain" id="PRO_0000277559" description="Interleukin-1 receptor-associated kinase-like 2">
    <location>
        <begin position="1"/>
        <end position="621"/>
    </location>
</feature>
<feature type="domain" description="Death">
    <location>
        <begin position="13"/>
        <end position="94"/>
    </location>
</feature>
<feature type="domain" description="Protein kinase" evidence="2">
    <location>
        <begin position="206"/>
        <end position="476"/>
    </location>
</feature>
<feature type="region of interest" description="Disordered" evidence="3">
    <location>
        <begin position="113"/>
        <end position="175"/>
    </location>
</feature>
<feature type="region of interest" description="Disordered" evidence="3">
    <location>
        <begin position="503"/>
        <end position="534"/>
    </location>
</feature>
<feature type="compositionally biased region" description="Polar residues" evidence="3">
    <location>
        <begin position="157"/>
        <end position="169"/>
    </location>
</feature>
<feature type="compositionally biased region" description="Polar residues" evidence="3">
    <location>
        <begin position="503"/>
        <end position="522"/>
    </location>
</feature>
<feature type="binding site" evidence="2">
    <location>
        <begin position="212"/>
        <end position="220"/>
    </location>
    <ligand>
        <name>ATP</name>
        <dbReference type="ChEBI" id="CHEBI:30616"/>
    </ligand>
</feature>
<feature type="binding site" evidence="2">
    <location>
        <position position="233"/>
    </location>
    <ligand>
        <name>ATP</name>
        <dbReference type="ChEBI" id="CHEBI:30616"/>
    </ligand>
</feature>
<feature type="binding site" evidence="2">
    <location>
        <begin position="333"/>
        <end position="336"/>
    </location>
    <ligand>
        <name>ATP</name>
        <dbReference type="ChEBI" id="CHEBI:30616"/>
    </ligand>
</feature>
<gene>
    <name type="primary">IRAK2</name>
</gene>
<dbReference type="EMBL" id="BC120001">
    <property type="protein sequence ID" value="AAI20002.1"/>
    <property type="molecule type" value="mRNA"/>
</dbReference>
<dbReference type="RefSeq" id="NP_001069164.1">
    <property type="nucleotide sequence ID" value="NM_001075696.2"/>
</dbReference>
<dbReference type="SMR" id="Q0P5I2"/>
<dbReference type="FunCoup" id="Q0P5I2">
    <property type="interactions" value="146"/>
</dbReference>
<dbReference type="STRING" id="9913.ENSBTAP00000008135"/>
<dbReference type="PaxDb" id="9913-ENSBTAP00000008135"/>
<dbReference type="GeneID" id="515034"/>
<dbReference type="KEGG" id="bta:515034"/>
<dbReference type="CTD" id="3656"/>
<dbReference type="VEuPathDB" id="HostDB:ENSBTAG00000006193"/>
<dbReference type="eggNOG" id="KOG1187">
    <property type="taxonomic scope" value="Eukaryota"/>
</dbReference>
<dbReference type="InParanoid" id="Q0P5I2"/>
<dbReference type="OMA" id="ALSEWDW"/>
<dbReference type="OrthoDB" id="4062651at2759"/>
<dbReference type="TreeFam" id="TF328924"/>
<dbReference type="Reactome" id="R-BTA-450302">
    <property type="pathway name" value="activated TAK1 mediates p38 MAPK activation"/>
</dbReference>
<dbReference type="Reactome" id="R-BTA-450321">
    <property type="pathway name" value="JNK (c-Jun kinases) phosphorylation and activation mediated by activated human TAK1"/>
</dbReference>
<dbReference type="Reactome" id="R-BTA-9020702">
    <property type="pathway name" value="Interleukin-1 signaling"/>
</dbReference>
<dbReference type="Reactome" id="R-BTA-937042">
    <property type="pathway name" value="IRAK2 mediated activation of TAK1 complex"/>
</dbReference>
<dbReference type="Reactome" id="R-BTA-937072">
    <property type="pathway name" value="TRAF6-mediated induction of TAK1 complex within TLR4 complex"/>
</dbReference>
<dbReference type="Reactome" id="R-BTA-975163">
    <property type="pathway name" value="IRAK2 mediated activation of TAK1 complex upon TLR7/8 or 9 stimulation"/>
</dbReference>
<dbReference type="Proteomes" id="UP000009136">
    <property type="component" value="Chromosome 22"/>
</dbReference>
<dbReference type="Bgee" id="ENSBTAG00000006193">
    <property type="expression patterns" value="Expressed in choroid plexus and 103 other cell types or tissues"/>
</dbReference>
<dbReference type="GO" id="GO:0005737">
    <property type="term" value="C:cytoplasm"/>
    <property type="evidence" value="ECO:0000318"/>
    <property type="project" value="GO_Central"/>
</dbReference>
<dbReference type="GO" id="GO:0005634">
    <property type="term" value="C:nucleus"/>
    <property type="evidence" value="ECO:0000318"/>
    <property type="project" value="GO_Central"/>
</dbReference>
<dbReference type="GO" id="GO:0005886">
    <property type="term" value="C:plasma membrane"/>
    <property type="evidence" value="ECO:0000318"/>
    <property type="project" value="GO_Central"/>
</dbReference>
<dbReference type="GO" id="GO:0005524">
    <property type="term" value="F:ATP binding"/>
    <property type="evidence" value="ECO:0007669"/>
    <property type="project" value="UniProtKB-KW"/>
</dbReference>
<dbReference type="GO" id="GO:0004672">
    <property type="term" value="F:protein kinase activity"/>
    <property type="evidence" value="ECO:0007669"/>
    <property type="project" value="InterPro"/>
</dbReference>
<dbReference type="GO" id="GO:0070498">
    <property type="term" value="P:interleukin-1-mediated signaling pathway"/>
    <property type="evidence" value="ECO:0000318"/>
    <property type="project" value="GO_Central"/>
</dbReference>
<dbReference type="GO" id="GO:0035556">
    <property type="term" value="P:intracellular signal transduction"/>
    <property type="evidence" value="ECO:0000318"/>
    <property type="project" value="GO_Central"/>
</dbReference>
<dbReference type="GO" id="GO:0031663">
    <property type="term" value="P:lipopolysaccharide-mediated signaling pathway"/>
    <property type="evidence" value="ECO:0000318"/>
    <property type="project" value="GO_Central"/>
</dbReference>
<dbReference type="GO" id="GO:0043123">
    <property type="term" value="P:positive regulation of canonical NF-kappaB signal transduction"/>
    <property type="evidence" value="ECO:0000318"/>
    <property type="project" value="GO_Central"/>
</dbReference>
<dbReference type="GO" id="GO:0008063">
    <property type="term" value="P:Toll signaling pathway"/>
    <property type="evidence" value="ECO:0000318"/>
    <property type="project" value="GO_Central"/>
</dbReference>
<dbReference type="CDD" id="cd08795">
    <property type="entry name" value="Death_IRAK2"/>
    <property type="match status" value="1"/>
</dbReference>
<dbReference type="FunFam" id="1.10.510.10:FF:000586">
    <property type="entry name" value="Interleukin-1 receptor-associated kinase-like 2"/>
    <property type="match status" value="1"/>
</dbReference>
<dbReference type="FunFam" id="1.10.533.10:FF:000030">
    <property type="entry name" value="Interleukin-1 receptor-associated kinase-like 2"/>
    <property type="match status" value="1"/>
</dbReference>
<dbReference type="FunFam" id="3.30.200.20:FF:000412">
    <property type="entry name" value="interleukin-1 receptor-associated kinase-like 2"/>
    <property type="match status" value="1"/>
</dbReference>
<dbReference type="Gene3D" id="1.10.533.10">
    <property type="entry name" value="Death Domain, Fas"/>
    <property type="match status" value="1"/>
</dbReference>
<dbReference type="Gene3D" id="3.30.200.20">
    <property type="entry name" value="Phosphorylase Kinase, domain 1"/>
    <property type="match status" value="1"/>
</dbReference>
<dbReference type="Gene3D" id="1.10.510.10">
    <property type="entry name" value="Transferase(Phosphotransferase) domain 1"/>
    <property type="match status" value="1"/>
</dbReference>
<dbReference type="InterPro" id="IPR011029">
    <property type="entry name" value="DEATH-like_dom_sf"/>
</dbReference>
<dbReference type="InterPro" id="IPR000488">
    <property type="entry name" value="Death_dom"/>
</dbReference>
<dbReference type="InterPro" id="IPR042151">
    <property type="entry name" value="Death_IRAK2"/>
</dbReference>
<dbReference type="InterPro" id="IPR011009">
    <property type="entry name" value="Kinase-like_dom_sf"/>
</dbReference>
<dbReference type="InterPro" id="IPR000719">
    <property type="entry name" value="Prot_kinase_dom"/>
</dbReference>
<dbReference type="PANTHER" id="PTHR24419">
    <property type="entry name" value="INTERLEUKIN-1 RECEPTOR-ASSOCIATED KINASE"/>
    <property type="match status" value="1"/>
</dbReference>
<dbReference type="PANTHER" id="PTHR24419:SF2">
    <property type="entry name" value="INTERLEUKIN-1 RECEPTOR-ASSOCIATED KINASE-LIKE 2"/>
    <property type="match status" value="1"/>
</dbReference>
<dbReference type="Pfam" id="PF00531">
    <property type="entry name" value="Death"/>
    <property type="match status" value="1"/>
</dbReference>
<dbReference type="Pfam" id="PF00069">
    <property type="entry name" value="Pkinase"/>
    <property type="match status" value="1"/>
</dbReference>
<dbReference type="SUPFAM" id="SSF47986">
    <property type="entry name" value="DEATH domain"/>
    <property type="match status" value="1"/>
</dbReference>
<dbReference type="SUPFAM" id="SSF56112">
    <property type="entry name" value="Protein kinase-like (PK-like)"/>
    <property type="match status" value="1"/>
</dbReference>
<dbReference type="PROSITE" id="PS50011">
    <property type="entry name" value="PROTEIN_KINASE_DOM"/>
    <property type="match status" value="1"/>
</dbReference>
<organism>
    <name type="scientific">Bos taurus</name>
    <name type="common">Bovine</name>
    <dbReference type="NCBI Taxonomy" id="9913"/>
    <lineage>
        <taxon>Eukaryota</taxon>
        <taxon>Metazoa</taxon>
        <taxon>Chordata</taxon>
        <taxon>Craniata</taxon>
        <taxon>Vertebrata</taxon>
        <taxon>Euteleostomi</taxon>
        <taxon>Mammalia</taxon>
        <taxon>Eutheria</taxon>
        <taxon>Laurasiatheria</taxon>
        <taxon>Artiodactyla</taxon>
        <taxon>Ruminantia</taxon>
        <taxon>Pecora</taxon>
        <taxon>Bovidae</taxon>
        <taxon>Bovinae</taxon>
        <taxon>Bos</taxon>
    </lineage>
</organism>
<protein>
    <recommendedName>
        <fullName>Interleukin-1 receptor-associated kinase-like 2</fullName>
        <shortName>IRAK-2</shortName>
    </recommendedName>
</protein>
<sequence>MSCYIYQLPSWVLDDLCRNMDTLSEWDWMQFASYVITDLTQLRKIKSMERAQGVSITRELLWWWGMRQATVQQLLDLLCHLELYRAAQIILNWKPVLEVKSSIPDFSDTVKPGKPLAASVRNTEDKQETGQPVRPPTFPGSGPAAVRVNLPAPPEDASSSLKTNQTASADSKDFSASIPKQETLSSLAGDDLFWSEVDVIQATDNFNPSHKISEGTFADVYRGHKRGTPFIFKKLREMACSGPGSVEKFFQAEVQICRRCCHPNVLPLLGCCTGEQFYSLIYPYMANGSLQDRLQGQGGSDPLPWPQRISICSGLLHAVEHLHSLEIIHGNVKSSNVLLDQNFTPKLAHSMAHPCPVNRTSKYTMMKTHLFQASTAYLPEDFIRVGQLTKRVDIFSCGIVLAEVLTGIPAMDNNRNPVYLKDLLLHEIPSSTISLCSRKMGVEKEMAKEICQKYLEKRAGRLPEAHAEALVMAACLCLRRRNASLAEVCSSVAAVEEQLRGQETSLPCSGLSEGTGSSFNTPEETDDVDNSSFDGSYSMRAAPWAGATSSPPLTADEEGMLLAGGAVEADSSAEACAPPEPPQDATETSWKIEINEAKRKLMENILLYKEEKLDSIELFGP</sequence>